<reference key="1">
    <citation type="journal article" date="1991" name="J. Bacteriol.">
        <title>rbcR, a gene coding for a member of the LysR family of transcriptional regulators, is located upstream of the expressed set of ribulose 1,5-bisphosphate carboxylase/oxygenase genes in the photosynthetic bacterium Chromatium vinosum.</title>
        <authorList>
            <person name="Viale A.M."/>
            <person name="Kobayashi H."/>
            <person name="Akazawa T."/>
            <person name="Henikoff S."/>
        </authorList>
    </citation>
    <scope>NUCLEOTIDE SEQUENCE [GENOMIC DNA]</scope>
</reference>
<reference key="2">
    <citation type="journal article" date="1989" name="J. Bacteriol.">
        <title>Expressed genes for plant-type ribulose 1,5-bisphosphate carboxylase/oxygenase in the photosynthetic bacterium Chromatium vinosum, which possesses two complete sets of the genes.</title>
        <authorList>
            <person name="Viale A.M."/>
            <person name="Kobayashi H."/>
            <person name="Akazawa T."/>
        </authorList>
    </citation>
    <scope>NUCLEOTIDE SEQUENCE [GENOMIC DNA] OF 1-57</scope>
</reference>
<dbReference type="EMBL" id="M64032">
    <property type="protein sequence ID" value="AAA23327.1"/>
    <property type="molecule type" value="Genomic_DNA"/>
</dbReference>
<dbReference type="EMBL" id="M26396">
    <property type="status" value="NOT_ANNOTATED_CDS"/>
    <property type="molecule type" value="Genomic_DNA"/>
</dbReference>
<dbReference type="PIR" id="A40369">
    <property type="entry name" value="A40369"/>
</dbReference>
<dbReference type="SMR" id="P25544"/>
<dbReference type="GO" id="GO:0003700">
    <property type="term" value="F:DNA-binding transcription factor activity"/>
    <property type="evidence" value="ECO:0007669"/>
    <property type="project" value="InterPro"/>
</dbReference>
<dbReference type="GO" id="GO:0000976">
    <property type="term" value="F:transcription cis-regulatory region binding"/>
    <property type="evidence" value="ECO:0007669"/>
    <property type="project" value="TreeGrafter"/>
</dbReference>
<dbReference type="CDD" id="cd08419">
    <property type="entry name" value="PBP2_CbbR_RubisCO_like"/>
    <property type="match status" value="1"/>
</dbReference>
<dbReference type="FunFam" id="1.10.10.10:FF:000001">
    <property type="entry name" value="LysR family transcriptional regulator"/>
    <property type="match status" value="1"/>
</dbReference>
<dbReference type="Gene3D" id="3.40.190.290">
    <property type="match status" value="1"/>
</dbReference>
<dbReference type="Gene3D" id="1.10.10.10">
    <property type="entry name" value="Winged helix-like DNA-binding domain superfamily/Winged helix DNA-binding domain"/>
    <property type="match status" value="1"/>
</dbReference>
<dbReference type="InterPro" id="IPR005119">
    <property type="entry name" value="LysR_subst-bd"/>
</dbReference>
<dbReference type="InterPro" id="IPR000847">
    <property type="entry name" value="Tscrpt_reg_HTH_LysR"/>
</dbReference>
<dbReference type="InterPro" id="IPR036388">
    <property type="entry name" value="WH-like_DNA-bd_sf"/>
</dbReference>
<dbReference type="InterPro" id="IPR036390">
    <property type="entry name" value="WH_DNA-bd_sf"/>
</dbReference>
<dbReference type="PANTHER" id="PTHR30126:SF5">
    <property type="entry name" value="HTH-TYPE TRANSCRIPTIONAL ACTIVATOR CMPR"/>
    <property type="match status" value="1"/>
</dbReference>
<dbReference type="PANTHER" id="PTHR30126">
    <property type="entry name" value="HTH-TYPE TRANSCRIPTIONAL REGULATOR"/>
    <property type="match status" value="1"/>
</dbReference>
<dbReference type="Pfam" id="PF00126">
    <property type="entry name" value="HTH_1"/>
    <property type="match status" value="1"/>
</dbReference>
<dbReference type="Pfam" id="PF03466">
    <property type="entry name" value="LysR_substrate"/>
    <property type="match status" value="1"/>
</dbReference>
<dbReference type="PRINTS" id="PR00039">
    <property type="entry name" value="HTHLYSR"/>
</dbReference>
<dbReference type="SUPFAM" id="SSF53850">
    <property type="entry name" value="Periplasmic binding protein-like II"/>
    <property type="match status" value="1"/>
</dbReference>
<dbReference type="SUPFAM" id="SSF46785">
    <property type="entry name" value="Winged helix' DNA-binding domain"/>
    <property type="match status" value="1"/>
</dbReference>
<dbReference type="PROSITE" id="PS50931">
    <property type="entry name" value="HTH_LYSR"/>
    <property type="match status" value="1"/>
</dbReference>
<comment type="function">
    <text>Trans-acting transcriptional regulator of RuBisCO genes (rbcAB) expression.</text>
</comment>
<comment type="similarity">
    <text evidence="2">Belongs to the LysR transcriptional regulatory family.</text>
</comment>
<organism>
    <name type="scientific">Allochromatium vinosum</name>
    <name type="common">Chromatium vinosum</name>
    <dbReference type="NCBI Taxonomy" id="1049"/>
    <lineage>
        <taxon>Bacteria</taxon>
        <taxon>Pseudomonadati</taxon>
        <taxon>Pseudomonadota</taxon>
        <taxon>Gammaproteobacteria</taxon>
        <taxon>Chromatiales</taxon>
        <taxon>Chromatiaceae</taxon>
        <taxon>Allochromatium</taxon>
    </lineage>
</organism>
<keyword id="KW-0010">Activator</keyword>
<keyword id="KW-0238">DNA-binding</keyword>
<keyword id="KW-0804">Transcription</keyword>
<keyword id="KW-0805">Transcription regulation</keyword>
<accession>P25544</accession>
<sequence>MHVSLRQLRVFEAVARHNSYTRAAEELHLSQPAVSMQVRQLEDEIGLSLFERLGKQVVLTEAGREVFHYSRAIGQSLREMEEVLESLKGVSRGSLRIAVASTVNYFAPRLMAIFQQRHSGIGLRLDVTNRESLVQMLDSNSVDLVLMGVPPRNVEVEAEAFMDNPLVVIAPPDHPLAGERAISLARLAEETFVMREEGSGTRQAMERFFSERGQTIRHGMQMTRNEAVKQAVRSGLGLSVVSLHTIELELETRRLVTLDVEGFPDRRQWYLVYRRGKRLSPAAGAFREFVLSEAARMHCRLG</sequence>
<feature type="chain" id="PRO_0000105747" description="RuBisCO operon transcriptional regulator">
    <location>
        <begin position="1"/>
        <end position="302"/>
    </location>
</feature>
<feature type="domain" description="HTH lysR-type" evidence="1">
    <location>
        <begin position="1"/>
        <end position="60"/>
    </location>
</feature>
<feature type="DNA-binding region" description="H-T-H motif" evidence="1">
    <location>
        <begin position="20"/>
        <end position="39"/>
    </location>
</feature>
<proteinExistence type="inferred from homology"/>
<evidence type="ECO:0000255" key="1">
    <source>
        <dbReference type="PROSITE-ProRule" id="PRU00253"/>
    </source>
</evidence>
<evidence type="ECO:0000305" key="2"/>
<name>RBCR_ALLVI</name>
<gene>
    <name type="primary">rbcR</name>
</gene>
<protein>
    <recommendedName>
        <fullName>RuBisCO operon transcriptional regulator</fullName>
    </recommendedName>
</protein>